<feature type="chain" id="PRO_0000125723" description="Large ribosomal subunit protein uL1">
    <location>
        <begin position="1"/>
        <end position="238"/>
    </location>
</feature>
<name>RL1_RICPR</name>
<sequence>MSNKDICVKISGSKKIREAREKVKSDTLYNLTNAVAQLKSASYVKFDPTLEIVMKLGIDPRHSDQIVRGVVNLPAGTGKTIRVAVICKEEREEEAKSAGADLVGSINIIDEIKAGQINFDVCIATPDMMSMISSVARILGPKGLMPNPKLGTVTLDIKNAIKNAKSGQVEYRAEKAGIIHAGLGKLSFSDQDLLKNLNAFIGAVIKAKPVGLKGNYLKAIYLSSTMGASVQIDLTSIS</sequence>
<protein>
    <recommendedName>
        <fullName evidence="1">Large ribosomal subunit protein uL1</fullName>
    </recommendedName>
    <alternativeName>
        <fullName evidence="2">50S ribosomal protein L1</fullName>
    </alternativeName>
</protein>
<organism>
    <name type="scientific">Rickettsia prowazekii (strain Madrid E)</name>
    <dbReference type="NCBI Taxonomy" id="272947"/>
    <lineage>
        <taxon>Bacteria</taxon>
        <taxon>Pseudomonadati</taxon>
        <taxon>Pseudomonadota</taxon>
        <taxon>Alphaproteobacteria</taxon>
        <taxon>Rickettsiales</taxon>
        <taxon>Rickettsiaceae</taxon>
        <taxon>Rickettsieae</taxon>
        <taxon>Rickettsia</taxon>
        <taxon>typhus group</taxon>
    </lineage>
</organism>
<dbReference type="EMBL" id="AJ235270">
    <property type="protein sequence ID" value="CAA14605.1"/>
    <property type="molecule type" value="Genomic_DNA"/>
</dbReference>
<dbReference type="PIR" id="F71723">
    <property type="entry name" value="F71723"/>
</dbReference>
<dbReference type="RefSeq" id="NP_220528.1">
    <property type="nucleotide sequence ID" value="NC_000963.1"/>
</dbReference>
<dbReference type="RefSeq" id="WP_004599759.1">
    <property type="nucleotide sequence ID" value="NC_000963.1"/>
</dbReference>
<dbReference type="SMR" id="Q9ZE23"/>
<dbReference type="STRING" id="272947.gene:17555220"/>
<dbReference type="EnsemblBacteria" id="CAA14605">
    <property type="protein sequence ID" value="CAA14605"/>
    <property type="gene ID" value="CAA14605"/>
</dbReference>
<dbReference type="GeneID" id="57569265"/>
<dbReference type="KEGG" id="rpr:RP137"/>
<dbReference type="PATRIC" id="fig|272947.5.peg.138"/>
<dbReference type="eggNOG" id="COG0081">
    <property type="taxonomic scope" value="Bacteria"/>
</dbReference>
<dbReference type="HOGENOM" id="CLU_062853_0_0_5"/>
<dbReference type="OrthoDB" id="9803740at2"/>
<dbReference type="Proteomes" id="UP000002480">
    <property type="component" value="Chromosome"/>
</dbReference>
<dbReference type="GO" id="GO:0015934">
    <property type="term" value="C:large ribosomal subunit"/>
    <property type="evidence" value="ECO:0007669"/>
    <property type="project" value="InterPro"/>
</dbReference>
<dbReference type="GO" id="GO:0019843">
    <property type="term" value="F:rRNA binding"/>
    <property type="evidence" value="ECO:0007669"/>
    <property type="project" value="UniProtKB-UniRule"/>
</dbReference>
<dbReference type="GO" id="GO:0003735">
    <property type="term" value="F:structural constituent of ribosome"/>
    <property type="evidence" value="ECO:0007669"/>
    <property type="project" value="InterPro"/>
</dbReference>
<dbReference type="GO" id="GO:0000049">
    <property type="term" value="F:tRNA binding"/>
    <property type="evidence" value="ECO:0007669"/>
    <property type="project" value="UniProtKB-KW"/>
</dbReference>
<dbReference type="GO" id="GO:0006417">
    <property type="term" value="P:regulation of translation"/>
    <property type="evidence" value="ECO:0007669"/>
    <property type="project" value="UniProtKB-KW"/>
</dbReference>
<dbReference type="GO" id="GO:0006412">
    <property type="term" value="P:translation"/>
    <property type="evidence" value="ECO:0007669"/>
    <property type="project" value="UniProtKB-UniRule"/>
</dbReference>
<dbReference type="CDD" id="cd00403">
    <property type="entry name" value="Ribosomal_L1"/>
    <property type="match status" value="1"/>
</dbReference>
<dbReference type="FunFam" id="3.40.50.790:FF:000001">
    <property type="entry name" value="50S ribosomal protein L1"/>
    <property type="match status" value="1"/>
</dbReference>
<dbReference type="Gene3D" id="3.30.190.20">
    <property type="match status" value="1"/>
</dbReference>
<dbReference type="Gene3D" id="3.40.50.790">
    <property type="match status" value="1"/>
</dbReference>
<dbReference type="HAMAP" id="MF_01318_B">
    <property type="entry name" value="Ribosomal_uL1_B"/>
    <property type="match status" value="1"/>
</dbReference>
<dbReference type="InterPro" id="IPR005878">
    <property type="entry name" value="Ribosom_uL1_bac-type"/>
</dbReference>
<dbReference type="InterPro" id="IPR002143">
    <property type="entry name" value="Ribosomal_uL1"/>
</dbReference>
<dbReference type="InterPro" id="IPR023674">
    <property type="entry name" value="Ribosomal_uL1-like"/>
</dbReference>
<dbReference type="InterPro" id="IPR028364">
    <property type="entry name" value="Ribosomal_uL1/biogenesis"/>
</dbReference>
<dbReference type="InterPro" id="IPR016095">
    <property type="entry name" value="Ribosomal_uL1_3-a/b-sand"/>
</dbReference>
<dbReference type="InterPro" id="IPR023673">
    <property type="entry name" value="Ribosomal_uL1_CS"/>
</dbReference>
<dbReference type="NCBIfam" id="TIGR01169">
    <property type="entry name" value="rplA_bact"/>
    <property type="match status" value="1"/>
</dbReference>
<dbReference type="PANTHER" id="PTHR36427">
    <property type="entry name" value="54S RIBOSOMAL PROTEIN L1, MITOCHONDRIAL"/>
    <property type="match status" value="1"/>
</dbReference>
<dbReference type="PANTHER" id="PTHR36427:SF3">
    <property type="entry name" value="LARGE RIBOSOMAL SUBUNIT PROTEIN UL1M"/>
    <property type="match status" value="1"/>
</dbReference>
<dbReference type="Pfam" id="PF00687">
    <property type="entry name" value="Ribosomal_L1"/>
    <property type="match status" value="1"/>
</dbReference>
<dbReference type="PIRSF" id="PIRSF002155">
    <property type="entry name" value="Ribosomal_L1"/>
    <property type="match status" value="1"/>
</dbReference>
<dbReference type="SUPFAM" id="SSF56808">
    <property type="entry name" value="Ribosomal protein L1"/>
    <property type="match status" value="1"/>
</dbReference>
<dbReference type="PROSITE" id="PS01199">
    <property type="entry name" value="RIBOSOMAL_L1"/>
    <property type="match status" value="1"/>
</dbReference>
<accession>Q9ZE23</accession>
<reference key="1">
    <citation type="journal article" date="1998" name="Nature">
        <title>The genome sequence of Rickettsia prowazekii and the origin of mitochondria.</title>
        <authorList>
            <person name="Andersson S.G.E."/>
            <person name="Zomorodipour A."/>
            <person name="Andersson J.O."/>
            <person name="Sicheritz-Ponten T."/>
            <person name="Alsmark U.C.M."/>
            <person name="Podowski R.M."/>
            <person name="Naeslund A.K."/>
            <person name="Eriksson A.-S."/>
            <person name="Winkler H.H."/>
            <person name="Kurland C.G."/>
        </authorList>
    </citation>
    <scope>NUCLEOTIDE SEQUENCE [LARGE SCALE GENOMIC DNA]</scope>
    <source>
        <strain>Madrid E</strain>
    </source>
</reference>
<comment type="function">
    <text evidence="1">Binds directly to 23S rRNA. The L1 stalk is quite mobile in the ribosome, and is involved in E site tRNA release.</text>
</comment>
<comment type="function">
    <text evidence="1">Protein L1 is also a translational repressor protein, it controls the translation of the L11 operon by binding to its mRNA.</text>
</comment>
<comment type="subunit">
    <text evidence="1">Part of the 50S ribosomal subunit.</text>
</comment>
<comment type="similarity">
    <text evidence="1">Belongs to the universal ribosomal protein uL1 family.</text>
</comment>
<keyword id="KW-1185">Reference proteome</keyword>
<keyword id="KW-0678">Repressor</keyword>
<keyword id="KW-0687">Ribonucleoprotein</keyword>
<keyword id="KW-0689">Ribosomal protein</keyword>
<keyword id="KW-0694">RNA-binding</keyword>
<keyword id="KW-0699">rRNA-binding</keyword>
<keyword id="KW-0810">Translation regulation</keyword>
<keyword id="KW-0820">tRNA-binding</keyword>
<proteinExistence type="inferred from homology"/>
<gene>
    <name evidence="1" type="primary">rplA</name>
    <name type="ordered locus">RP137</name>
</gene>
<evidence type="ECO:0000255" key="1">
    <source>
        <dbReference type="HAMAP-Rule" id="MF_01318"/>
    </source>
</evidence>
<evidence type="ECO:0000305" key="2"/>